<organism>
    <name type="scientific">Mycoplasmopsis synoviae (strain 53)</name>
    <name type="common">Mycoplasma synoviae</name>
    <dbReference type="NCBI Taxonomy" id="262723"/>
    <lineage>
        <taxon>Bacteria</taxon>
        <taxon>Bacillati</taxon>
        <taxon>Mycoplasmatota</taxon>
        <taxon>Mycoplasmoidales</taxon>
        <taxon>Metamycoplasmataceae</taxon>
        <taxon>Mycoplasmopsis</taxon>
    </lineage>
</organism>
<reference key="1">
    <citation type="journal article" date="2005" name="J. Bacteriol.">
        <title>Swine and poultry pathogens: the complete genome sequences of two strains of Mycoplasma hyopneumoniae and a strain of Mycoplasma synoviae.</title>
        <authorList>
            <person name="Vasconcelos A.T.R."/>
            <person name="Ferreira H.B."/>
            <person name="Bizarro C.V."/>
            <person name="Bonatto S.L."/>
            <person name="Carvalho M.O."/>
            <person name="Pinto P.M."/>
            <person name="Almeida D.F."/>
            <person name="Almeida L.G.P."/>
            <person name="Almeida R."/>
            <person name="Alves-Junior L."/>
            <person name="Assuncao E.N."/>
            <person name="Azevedo V.A.C."/>
            <person name="Bogo M.R."/>
            <person name="Brigido M.M."/>
            <person name="Brocchi M."/>
            <person name="Burity H.A."/>
            <person name="Camargo A.A."/>
            <person name="Camargo S.S."/>
            <person name="Carepo M.S."/>
            <person name="Carraro D.M."/>
            <person name="de Mattos Cascardo J.C."/>
            <person name="Castro L.A."/>
            <person name="Cavalcanti G."/>
            <person name="Chemale G."/>
            <person name="Collevatti R.G."/>
            <person name="Cunha C.W."/>
            <person name="Dallagiovanna B."/>
            <person name="Dambros B.P."/>
            <person name="Dellagostin O.A."/>
            <person name="Falcao C."/>
            <person name="Fantinatti-Garboggini F."/>
            <person name="Felipe M.S.S."/>
            <person name="Fiorentin L."/>
            <person name="Franco G.R."/>
            <person name="Freitas N.S.A."/>
            <person name="Frias D."/>
            <person name="Grangeiro T.B."/>
            <person name="Grisard E.C."/>
            <person name="Guimaraes C.T."/>
            <person name="Hungria M."/>
            <person name="Jardim S.N."/>
            <person name="Krieger M.A."/>
            <person name="Laurino J.P."/>
            <person name="Lima L.F.A."/>
            <person name="Lopes M.I."/>
            <person name="Loreto E.L.S."/>
            <person name="Madeira H.M.F."/>
            <person name="Manfio G.P."/>
            <person name="Maranhao A.Q."/>
            <person name="Martinkovics C.T."/>
            <person name="Medeiros S.R.B."/>
            <person name="Moreira M.A.M."/>
            <person name="Neiva M."/>
            <person name="Ramalho-Neto C.E."/>
            <person name="Nicolas M.F."/>
            <person name="Oliveira S.C."/>
            <person name="Paixao R.F.C."/>
            <person name="Pedrosa F.O."/>
            <person name="Pena S.D.J."/>
            <person name="Pereira M."/>
            <person name="Pereira-Ferrari L."/>
            <person name="Piffer I."/>
            <person name="Pinto L.S."/>
            <person name="Potrich D.P."/>
            <person name="Salim A.C.M."/>
            <person name="Santos F.R."/>
            <person name="Schmitt R."/>
            <person name="Schneider M.P.C."/>
            <person name="Schrank A."/>
            <person name="Schrank I.S."/>
            <person name="Schuck A.F."/>
            <person name="Seuanez H.N."/>
            <person name="Silva D.W."/>
            <person name="Silva R."/>
            <person name="Silva S.C."/>
            <person name="Soares C.M.A."/>
            <person name="Souza K.R.L."/>
            <person name="Souza R.C."/>
            <person name="Staats C.C."/>
            <person name="Steffens M.B.R."/>
            <person name="Teixeira S.M.R."/>
            <person name="Urmenyi T.P."/>
            <person name="Vainstein M.H."/>
            <person name="Zuccherato L.W."/>
            <person name="Simpson A.J.G."/>
            <person name="Zaha A."/>
        </authorList>
    </citation>
    <scope>NUCLEOTIDE SEQUENCE [LARGE SCALE GENOMIC DNA]</scope>
    <source>
        <strain>53</strain>
    </source>
</reference>
<accession>Q4A611</accession>
<protein>
    <recommendedName>
        <fullName evidence="1">Thymidylate synthase</fullName>
        <shortName evidence="1">TS</shortName>
        <shortName evidence="1">TSase</shortName>
        <ecNumber evidence="1">2.1.1.45</ecNumber>
    </recommendedName>
</protein>
<dbReference type="EC" id="2.1.1.45" evidence="1"/>
<dbReference type="EMBL" id="AE017245">
    <property type="protein sequence ID" value="AAZ43810.1"/>
    <property type="molecule type" value="Genomic_DNA"/>
</dbReference>
<dbReference type="RefSeq" id="WP_011283541.1">
    <property type="nucleotide sequence ID" value="NC_007294.1"/>
</dbReference>
<dbReference type="SMR" id="Q4A611"/>
<dbReference type="STRING" id="262723.MS53_0398"/>
<dbReference type="KEGG" id="msy:MS53_0398"/>
<dbReference type="eggNOG" id="COG0207">
    <property type="taxonomic scope" value="Bacteria"/>
</dbReference>
<dbReference type="HOGENOM" id="CLU_021669_0_2_14"/>
<dbReference type="OrthoDB" id="9774633at2"/>
<dbReference type="UniPathway" id="UPA00575"/>
<dbReference type="Proteomes" id="UP000000549">
    <property type="component" value="Chromosome"/>
</dbReference>
<dbReference type="GO" id="GO:0005829">
    <property type="term" value="C:cytosol"/>
    <property type="evidence" value="ECO:0007669"/>
    <property type="project" value="TreeGrafter"/>
</dbReference>
<dbReference type="GO" id="GO:0004799">
    <property type="term" value="F:thymidylate synthase activity"/>
    <property type="evidence" value="ECO:0007669"/>
    <property type="project" value="UniProtKB-UniRule"/>
</dbReference>
<dbReference type="GO" id="GO:0006231">
    <property type="term" value="P:dTMP biosynthetic process"/>
    <property type="evidence" value="ECO:0007669"/>
    <property type="project" value="UniProtKB-UniRule"/>
</dbReference>
<dbReference type="GO" id="GO:0006235">
    <property type="term" value="P:dTTP biosynthetic process"/>
    <property type="evidence" value="ECO:0007669"/>
    <property type="project" value="UniProtKB-UniRule"/>
</dbReference>
<dbReference type="GO" id="GO:0032259">
    <property type="term" value="P:methylation"/>
    <property type="evidence" value="ECO:0007669"/>
    <property type="project" value="UniProtKB-KW"/>
</dbReference>
<dbReference type="CDD" id="cd00351">
    <property type="entry name" value="TS_Pyrimidine_HMase"/>
    <property type="match status" value="1"/>
</dbReference>
<dbReference type="FunFam" id="3.30.572.10:FF:000007">
    <property type="entry name" value="thymidylate synthase isoform X2"/>
    <property type="match status" value="1"/>
</dbReference>
<dbReference type="Gene3D" id="3.30.572.10">
    <property type="entry name" value="Thymidylate synthase/dCMP hydroxymethylase domain"/>
    <property type="match status" value="1"/>
</dbReference>
<dbReference type="HAMAP" id="MF_00008">
    <property type="entry name" value="Thymidy_synth_bact"/>
    <property type="match status" value="1"/>
</dbReference>
<dbReference type="InterPro" id="IPR045097">
    <property type="entry name" value="Thymidate_synth/dCMP_Mease"/>
</dbReference>
<dbReference type="InterPro" id="IPR023451">
    <property type="entry name" value="Thymidate_synth/dCMP_Mease_dom"/>
</dbReference>
<dbReference type="InterPro" id="IPR036926">
    <property type="entry name" value="Thymidate_synth/dCMP_Mease_sf"/>
</dbReference>
<dbReference type="InterPro" id="IPR000398">
    <property type="entry name" value="Thymidylate_synthase"/>
</dbReference>
<dbReference type="InterPro" id="IPR020940">
    <property type="entry name" value="Thymidylate_synthase_AS"/>
</dbReference>
<dbReference type="NCBIfam" id="NF002496">
    <property type="entry name" value="PRK01827.1-2"/>
    <property type="match status" value="1"/>
</dbReference>
<dbReference type="NCBIfam" id="TIGR03284">
    <property type="entry name" value="thym_sym"/>
    <property type="match status" value="1"/>
</dbReference>
<dbReference type="PANTHER" id="PTHR11548:SF9">
    <property type="entry name" value="THYMIDYLATE SYNTHASE"/>
    <property type="match status" value="1"/>
</dbReference>
<dbReference type="PANTHER" id="PTHR11548">
    <property type="entry name" value="THYMIDYLATE SYNTHASE 1"/>
    <property type="match status" value="1"/>
</dbReference>
<dbReference type="Pfam" id="PF00303">
    <property type="entry name" value="Thymidylat_synt"/>
    <property type="match status" value="1"/>
</dbReference>
<dbReference type="PRINTS" id="PR00108">
    <property type="entry name" value="THYMDSNTHASE"/>
</dbReference>
<dbReference type="SUPFAM" id="SSF55831">
    <property type="entry name" value="Thymidylate synthase/dCMP hydroxymethylase"/>
    <property type="match status" value="1"/>
</dbReference>
<dbReference type="PROSITE" id="PS00091">
    <property type="entry name" value="THYMIDYLATE_SYNTHASE"/>
    <property type="match status" value="1"/>
</dbReference>
<proteinExistence type="inferred from homology"/>
<gene>
    <name evidence="1" type="primary">thyA</name>
    <name type="ordered locus">MS53_0398</name>
</gene>
<evidence type="ECO:0000255" key="1">
    <source>
        <dbReference type="HAMAP-Rule" id="MF_00008"/>
    </source>
</evidence>
<name>TYSY_MYCS5</name>
<keyword id="KW-0963">Cytoplasm</keyword>
<keyword id="KW-0489">Methyltransferase</keyword>
<keyword id="KW-0545">Nucleotide biosynthesis</keyword>
<keyword id="KW-1185">Reference proteome</keyword>
<keyword id="KW-0808">Transferase</keyword>
<sequence length="289" mass="33586">MKQYLHLLEHIKTSGTFKKDRTNIGTISLFGLQARYNLKEGFPLLTTKKMAWKAICHELLWFLKGDTNIKYLVDNNVNIWNEWPYEIFKKSNDYQGESLKEFSQKIKEDSSFAQKYGELGPVYGKQWRDFFGVDQISQVINDIKNNPTSRRLIVSAWNVAQIDKMALPPCHAFFQFYVNDNNELSLHLYQRSGDMFLGVPFNIASYSLLLSMVAQVTNLKVGEFIHTIGDAHIYSNHIDQVNTQLERAPYKLPKLILNKNIKNIFDFTFEDIELENYISHETIKAKVAV</sequence>
<feature type="chain" id="PRO_1000000630" description="Thymidylate synthase">
    <location>
        <begin position="1"/>
        <end position="289"/>
    </location>
</feature>
<feature type="active site" description="Nucleophile" evidence="1">
    <location>
        <position position="170"/>
    </location>
</feature>
<feature type="binding site" description="in other chain" evidence="1">
    <location>
        <position position="21"/>
    </location>
    <ligand>
        <name>dUMP</name>
        <dbReference type="ChEBI" id="CHEBI:246422"/>
        <note>ligand shared between dimeric partners</note>
    </ligand>
</feature>
<feature type="binding site" evidence="1">
    <location>
        <begin position="150"/>
        <end position="151"/>
    </location>
    <ligand>
        <name>dUMP</name>
        <dbReference type="ChEBI" id="CHEBI:246422"/>
        <note>ligand shared between dimeric partners</note>
    </ligand>
</feature>
<feature type="binding site" description="in other chain" evidence="1">
    <location>
        <begin position="191"/>
        <end position="194"/>
    </location>
    <ligand>
        <name>dUMP</name>
        <dbReference type="ChEBI" id="CHEBI:246422"/>
        <note>ligand shared between dimeric partners</note>
    </ligand>
</feature>
<feature type="binding site" evidence="1">
    <location>
        <position position="194"/>
    </location>
    <ligand>
        <name>(6R)-5,10-methylene-5,6,7,8-tetrahydrofolate</name>
        <dbReference type="ChEBI" id="CHEBI:15636"/>
    </ligand>
</feature>
<feature type="binding site" description="in other chain" evidence="1">
    <location>
        <position position="202"/>
    </location>
    <ligand>
        <name>dUMP</name>
        <dbReference type="ChEBI" id="CHEBI:246422"/>
        <note>ligand shared between dimeric partners</note>
    </ligand>
</feature>
<feature type="binding site" description="in other chain" evidence="1">
    <location>
        <begin position="232"/>
        <end position="234"/>
    </location>
    <ligand>
        <name>dUMP</name>
        <dbReference type="ChEBI" id="CHEBI:246422"/>
        <note>ligand shared between dimeric partners</note>
    </ligand>
</feature>
<feature type="binding site" evidence="1">
    <location>
        <position position="288"/>
    </location>
    <ligand>
        <name>(6R)-5,10-methylene-5,6,7,8-tetrahydrofolate</name>
        <dbReference type="ChEBI" id="CHEBI:15636"/>
    </ligand>
</feature>
<comment type="function">
    <text evidence="1">Catalyzes the reductive methylation of 2'-deoxyuridine-5'-monophosphate (dUMP) to 2'-deoxythymidine-5'-monophosphate (dTMP) while utilizing 5,10-methylenetetrahydrofolate (mTHF) as the methyl donor and reductant in the reaction, yielding dihydrofolate (DHF) as a by-product. This enzymatic reaction provides an intracellular de novo source of dTMP, an essential precursor for DNA biosynthesis.</text>
</comment>
<comment type="catalytic activity">
    <reaction evidence="1">
        <text>dUMP + (6R)-5,10-methylene-5,6,7,8-tetrahydrofolate = 7,8-dihydrofolate + dTMP</text>
        <dbReference type="Rhea" id="RHEA:12104"/>
        <dbReference type="ChEBI" id="CHEBI:15636"/>
        <dbReference type="ChEBI" id="CHEBI:57451"/>
        <dbReference type="ChEBI" id="CHEBI:63528"/>
        <dbReference type="ChEBI" id="CHEBI:246422"/>
        <dbReference type="EC" id="2.1.1.45"/>
    </reaction>
</comment>
<comment type="pathway">
    <text evidence="1">Pyrimidine metabolism; dTTP biosynthesis.</text>
</comment>
<comment type="subunit">
    <text evidence="1">Homodimer.</text>
</comment>
<comment type="subcellular location">
    <subcellularLocation>
        <location evidence="1">Cytoplasm</location>
    </subcellularLocation>
</comment>
<comment type="similarity">
    <text evidence="1">Belongs to the thymidylate synthase family. Bacterial-type ThyA subfamily.</text>
</comment>